<protein>
    <recommendedName>
        <fullName>Protein Wnt-9a</fullName>
    </recommendedName>
    <alternativeName>
        <fullName evidence="9">Wnt-14</fullName>
    </alternativeName>
</protein>
<dbReference type="EMBL" id="AF031168">
    <property type="protein sequence ID" value="AAC41248.1"/>
    <property type="molecule type" value="mRNA"/>
</dbReference>
<dbReference type="SMR" id="O42280"/>
<dbReference type="FunCoup" id="O42280">
    <property type="interactions" value="4"/>
</dbReference>
<dbReference type="STRING" id="9031.ENSGALP00000008661"/>
<dbReference type="GlyCosmos" id="O42280">
    <property type="glycosylation" value="1 site, No reported glycans"/>
</dbReference>
<dbReference type="GlyGen" id="O42280">
    <property type="glycosylation" value="1 site"/>
</dbReference>
<dbReference type="PaxDb" id="9031-ENSGALP00000008661"/>
<dbReference type="VEuPathDB" id="HostDB:geneid_395829"/>
<dbReference type="eggNOG" id="KOG3913">
    <property type="taxonomic scope" value="Eukaryota"/>
</dbReference>
<dbReference type="InParanoid" id="O42280"/>
<dbReference type="OrthoDB" id="5945655at2759"/>
<dbReference type="PhylomeDB" id="O42280"/>
<dbReference type="Proteomes" id="UP000000539">
    <property type="component" value="Unassembled WGS sequence"/>
</dbReference>
<dbReference type="GO" id="GO:0005615">
    <property type="term" value="C:extracellular space"/>
    <property type="evidence" value="ECO:0000318"/>
    <property type="project" value="GO_Central"/>
</dbReference>
<dbReference type="GO" id="GO:0005125">
    <property type="term" value="F:cytokine activity"/>
    <property type="evidence" value="ECO:0000318"/>
    <property type="project" value="GO_Central"/>
</dbReference>
<dbReference type="GO" id="GO:0005109">
    <property type="term" value="F:frizzled binding"/>
    <property type="evidence" value="ECO:0000318"/>
    <property type="project" value="GO_Central"/>
</dbReference>
<dbReference type="GO" id="GO:0060070">
    <property type="term" value="P:canonical Wnt signaling pathway"/>
    <property type="evidence" value="ECO:0000318"/>
    <property type="project" value="GO_Central"/>
</dbReference>
<dbReference type="GO" id="GO:0045165">
    <property type="term" value="P:cell fate commitment"/>
    <property type="evidence" value="ECO:0000318"/>
    <property type="project" value="GO_Central"/>
</dbReference>
<dbReference type="GO" id="GO:0061303">
    <property type="term" value="P:cornea development in camera-type eye"/>
    <property type="evidence" value="ECO:0000270"/>
    <property type="project" value="BHF-UCL"/>
</dbReference>
<dbReference type="GO" id="GO:0072498">
    <property type="term" value="P:embryonic skeletal joint development"/>
    <property type="evidence" value="ECO:0000315"/>
    <property type="project" value="BHF-UCL"/>
</dbReference>
<dbReference type="GO" id="GO:0061072">
    <property type="term" value="P:iris morphogenesis"/>
    <property type="evidence" value="ECO:0000270"/>
    <property type="project" value="BHF-UCL"/>
</dbReference>
<dbReference type="GO" id="GO:0032331">
    <property type="term" value="P:negative regulation of chondrocyte differentiation"/>
    <property type="evidence" value="ECO:0000315"/>
    <property type="project" value="BHF-UCL"/>
</dbReference>
<dbReference type="GO" id="GO:0030182">
    <property type="term" value="P:neuron differentiation"/>
    <property type="evidence" value="ECO:0000318"/>
    <property type="project" value="GO_Central"/>
</dbReference>
<dbReference type="GO" id="GO:1902764">
    <property type="term" value="P:positive regulation of embryonic skeletal joint development"/>
    <property type="evidence" value="ECO:0000304"/>
    <property type="project" value="AgBase"/>
</dbReference>
<dbReference type="CDD" id="cd19353">
    <property type="entry name" value="Wnt_Wnt9a"/>
    <property type="match status" value="1"/>
</dbReference>
<dbReference type="FunFam" id="3.30.2460.20:FF:000002">
    <property type="entry name" value="Protein Wnt"/>
    <property type="match status" value="1"/>
</dbReference>
<dbReference type="Gene3D" id="3.30.2460.20">
    <property type="match status" value="1"/>
</dbReference>
<dbReference type="InterPro" id="IPR005817">
    <property type="entry name" value="Wnt"/>
</dbReference>
<dbReference type="InterPro" id="IPR013303">
    <property type="entry name" value="Wnt9a"/>
</dbReference>
<dbReference type="InterPro" id="IPR043158">
    <property type="entry name" value="Wnt_C"/>
</dbReference>
<dbReference type="InterPro" id="IPR018161">
    <property type="entry name" value="Wnt_CS"/>
</dbReference>
<dbReference type="PANTHER" id="PTHR12027:SF75">
    <property type="entry name" value="PROTEIN WNT-9A"/>
    <property type="match status" value="1"/>
</dbReference>
<dbReference type="PANTHER" id="PTHR12027">
    <property type="entry name" value="WNT RELATED"/>
    <property type="match status" value="1"/>
</dbReference>
<dbReference type="Pfam" id="PF00110">
    <property type="entry name" value="wnt"/>
    <property type="match status" value="1"/>
</dbReference>
<dbReference type="PRINTS" id="PR01894">
    <property type="entry name" value="WNT14PROTEIN"/>
</dbReference>
<dbReference type="PRINTS" id="PR01349">
    <property type="entry name" value="WNTPROTEIN"/>
</dbReference>
<dbReference type="SMART" id="SM00097">
    <property type="entry name" value="WNT1"/>
    <property type="match status" value="1"/>
</dbReference>
<dbReference type="PROSITE" id="PS00246">
    <property type="entry name" value="WNT1"/>
    <property type="match status" value="1"/>
</dbReference>
<name>WNT9A_CHICK</name>
<accession>O42280</accession>
<evidence type="ECO:0000250" key="1">
    <source>
        <dbReference type="UniProtKB" id="O14904"/>
    </source>
</evidence>
<evidence type="ECO:0000250" key="2">
    <source>
        <dbReference type="UniProtKB" id="P27467"/>
    </source>
</evidence>
<evidence type="ECO:0000250" key="3">
    <source>
        <dbReference type="UniProtKB" id="P28026"/>
    </source>
</evidence>
<evidence type="ECO:0000250" key="4">
    <source>
        <dbReference type="UniProtKB" id="P56704"/>
    </source>
</evidence>
<evidence type="ECO:0000250" key="5">
    <source>
        <dbReference type="UniProtKB" id="Q8R5M2"/>
    </source>
</evidence>
<evidence type="ECO:0000255" key="6"/>
<evidence type="ECO:0000256" key="7">
    <source>
        <dbReference type="SAM" id="MobiDB-lite"/>
    </source>
</evidence>
<evidence type="ECO:0000269" key="8">
    <source>
    </source>
</evidence>
<evidence type="ECO:0000303" key="9">
    <source>
    </source>
</evidence>
<evidence type="ECO:0000305" key="10"/>
<proteinExistence type="evidence at transcript level"/>
<keyword id="KW-0217">Developmental protein</keyword>
<keyword id="KW-1015">Disulfide bond</keyword>
<keyword id="KW-0272">Extracellular matrix</keyword>
<keyword id="KW-0325">Glycoprotein</keyword>
<keyword id="KW-0449">Lipoprotein</keyword>
<keyword id="KW-1185">Reference proteome</keyword>
<keyword id="KW-0964">Secreted</keyword>
<keyword id="KW-0732">Signal</keyword>
<keyword id="KW-0879">Wnt signaling pathway</keyword>
<organism>
    <name type="scientific">Gallus gallus</name>
    <name type="common">Chicken</name>
    <dbReference type="NCBI Taxonomy" id="9031"/>
    <lineage>
        <taxon>Eukaryota</taxon>
        <taxon>Metazoa</taxon>
        <taxon>Chordata</taxon>
        <taxon>Craniata</taxon>
        <taxon>Vertebrata</taxon>
        <taxon>Euteleostomi</taxon>
        <taxon>Archelosauria</taxon>
        <taxon>Archosauria</taxon>
        <taxon>Dinosauria</taxon>
        <taxon>Saurischia</taxon>
        <taxon>Theropoda</taxon>
        <taxon>Coelurosauria</taxon>
        <taxon>Aves</taxon>
        <taxon>Neognathae</taxon>
        <taxon>Galloanserae</taxon>
        <taxon>Galliformes</taxon>
        <taxon>Phasianidae</taxon>
        <taxon>Phasianinae</taxon>
        <taxon>Gallus</taxon>
    </lineage>
</organism>
<gene>
    <name type="primary">WNT9A</name>
    <name evidence="9" type="synonym">WNT14</name>
</gene>
<feature type="signal peptide" evidence="6">
    <location>
        <begin position="1"/>
        <end position="15"/>
    </location>
</feature>
<feature type="chain" id="PRO_0000041457" description="Protein Wnt-9a">
    <location>
        <begin position="16"/>
        <end position="354"/>
    </location>
</feature>
<feature type="region of interest" description="Disordered" evidence="7">
    <location>
        <begin position="246"/>
        <end position="271"/>
    </location>
</feature>
<feature type="lipid moiety-binding region" description="O-palmitoleoyl serine; by PORCN" evidence="4">
    <location>
        <position position="213"/>
    </location>
</feature>
<feature type="glycosylation site" description="N-linked (GlcNAc...) asparagine" evidence="6">
    <location>
        <position position="95"/>
    </location>
</feature>
<feature type="disulfide bond" evidence="3">
    <location>
        <begin position="85"/>
        <end position="96"/>
    </location>
</feature>
<feature type="disulfide bond" evidence="3">
    <location>
        <begin position="133"/>
        <end position="141"/>
    </location>
</feature>
<feature type="disulfide bond" evidence="3">
    <location>
        <begin position="143"/>
        <end position="160"/>
    </location>
</feature>
<feature type="disulfide bond" evidence="3">
    <location>
        <begin position="207"/>
        <end position="221"/>
    </location>
</feature>
<feature type="disulfide bond" evidence="3">
    <location>
        <begin position="209"/>
        <end position="216"/>
    </location>
</feature>
<feature type="disulfide bond" evidence="3">
    <location>
        <begin position="288"/>
        <end position="313"/>
    </location>
</feature>
<feature type="disulfide bond" evidence="3">
    <location>
        <begin position="302"/>
        <end position="308"/>
    </location>
</feature>
<feature type="disulfide bond" evidence="3">
    <location>
        <begin position="312"/>
        <end position="352"/>
    </location>
</feature>
<feature type="disulfide bond" evidence="3">
    <location>
        <begin position="328"/>
        <end position="343"/>
    </location>
</feature>
<feature type="disulfide bond" evidence="3">
    <location>
        <begin position="330"/>
        <end position="340"/>
    </location>
</feature>
<feature type="disulfide bond" evidence="3">
    <location>
        <begin position="335"/>
        <end position="336"/>
    </location>
</feature>
<reference key="1">
    <citation type="journal article" date="1997" name="Genomics">
        <title>Isolation of two novel WNT genes, WNT14 and WNT15, one of which (WNT15) is closely linked to WNT3 on human chromosome 17q21.</title>
        <authorList>
            <person name="Bergstein I."/>
            <person name="Eisenberg L.M."/>
            <person name="Bhalerao J."/>
            <person name="Jenkins N.A."/>
            <person name="Copeland N.G."/>
            <person name="Osborne M.P."/>
            <person name="Bowcock A.M."/>
            <person name="Brown A.M.C."/>
        </authorList>
    </citation>
    <scope>NUCLEOTIDE SEQUENCE [MRNA]</scope>
    <source>
        <tissue>Brain</tissue>
    </source>
</reference>
<reference key="2">
    <citation type="journal article" date="2006" name="Development">
        <title>Wnt9a signaling is required for joint integrity and regulation of Ihh during chondrogenesis.</title>
        <authorList>
            <person name="Spaeter D."/>
            <person name="Hill T.P."/>
            <person name="O'sullivan R.J."/>
            <person name="Gruber M."/>
            <person name="Conner D.A."/>
            <person name="Hartmann C."/>
        </authorList>
    </citation>
    <scope>FUNCTION</scope>
</reference>
<comment type="function">
    <text evidence="5 8 10">Ligand for members of the frizzled family of seven transmembrane receptors (Probable). Functions in the canonical Wnt/beta-catenin signaling pathway (PubMed:16818445). Plays a role in embryonic chondrocyte maturation and in embryonic bone mineralization (By similarity).</text>
</comment>
<comment type="subcellular location">
    <subcellularLocation>
        <location evidence="1">Secreted</location>
        <location evidence="1">Extracellular space</location>
        <location evidence="1">Extracellular matrix</location>
    </subcellularLocation>
    <subcellularLocation>
        <location evidence="1">Secreted</location>
    </subcellularLocation>
</comment>
<comment type="PTM">
    <text evidence="2 4">Palmitoleoylation is required for efficient binding to frizzled receptors. Depalmitoleoylation leads to Wnt signaling pathway inhibition.</text>
</comment>
<comment type="similarity">
    <text evidence="10">Belongs to the Wnt family.</text>
</comment>
<sequence>MALLRALLGLLACTPRPSAAYFGLTGNEALTILPLTSEMEEAAVKAHYKVCDRLKLEKKQRRMCRRDPGGAETLMEAISMSALECQYQFRFERWNCTLEGRYRASLLKRGFKETAFLYAISSAGLTHAMAKACSAGRMERCTCDEAPDLENREAWQWGGCGDNLKYSNKFVKEFLGRKPNKDLRARVDFHNNLVGMKVIKAGVETTCKCHGVSGSCTVRTCWRQLSPFHEIGKQLKQKYETSLKVGSTTNEATGEGDISPPKKSIPGHSDQIPRTTDLVYIDDSPSFCLMSRYSPGTSGRKCYKDKNCDSICCGRGHNTQSRVVTRPCQCQVRWCCYVECKQCTQREEVYTCKD</sequence>